<name>COBQ_PSEFS</name>
<reference key="1">
    <citation type="journal article" date="2009" name="Genome Biol.">
        <title>Genomic and genetic analyses of diversity and plant interactions of Pseudomonas fluorescens.</title>
        <authorList>
            <person name="Silby M.W."/>
            <person name="Cerdeno-Tarraga A.M."/>
            <person name="Vernikos G.S."/>
            <person name="Giddens S.R."/>
            <person name="Jackson R.W."/>
            <person name="Preston G.M."/>
            <person name="Zhang X.-X."/>
            <person name="Moon C.D."/>
            <person name="Gehrig S.M."/>
            <person name="Godfrey S.A.C."/>
            <person name="Knight C.G."/>
            <person name="Malone J.G."/>
            <person name="Robinson Z."/>
            <person name="Spiers A.J."/>
            <person name="Harris S."/>
            <person name="Challis G.L."/>
            <person name="Yaxley A.M."/>
            <person name="Harris D."/>
            <person name="Seeger K."/>
            <person name="Murphy L."/>
            <person name="Rutter S."/>
            <person name="Squares R."/>
            <person name="Quail M.A."/>
            <person name="Saunders E."/>
            <person name="Mavromatis K."/>
            <person name="Brettin T.S."/>
            <person name="Bentley S.D."/>
            <person name="Hothersall J."/>
            <person name="Stephens E."/>
            <person name="Thomas C.M."/>
            <person name="Parkhill J."/>
            <person name="Levy S.B."/>
            <person name="Rainey P.B."/>
            <person name="Thomson N.R."/>
        </authorList>
    </citation>
    <scope>NUCLEOTIDE SEQUENCE [LARGE SCALE GENOMIC DNA]</scope>
    <source>
        <strain>SBW25</strain>
    </source>
</reference>
<keyword id="KW-0169">Cobalamin biosynthesis</keyword>
<keyword id="KW-0315">Glutamine amidotransferase</keyword>
<comment type="function">
    <text evidence="1">Catalyzes amidations at positions B, D, E, and G on adenosylcobyrinic A,C-diamide. NH(2) groups are provided by glutamine, and one molecule of ATP is hydrogenolyzed for each amidation.</text>
</comment>
<comment type="pathway">
    <text evidence="1">Cofactor biosynthesis; adenosylcobalamin biosynthesis.</text>
</comment>
<comment type="similarity">
    <text evidence="1">Belongs to the CobB/CobQ family. CobQ subfamily.</text>
</comment>
<dbReference type="EMBL" id="AM181176">
    <property type="protein sequence ID" value="CAY51181.1"/>
    <property type="molecule type" value="Genomic_DNA"/>
</dbReference>
<dbReference type="RefSeq" id="WP_015885236.1">
    <property type="nucleotide sequence ID" value="NC_012660.1"/>
</dbReference>
<dbReference type="SMR" id="C3K0Z0"/>
<dbReference type="STRING" id="294.SRM1_01643"/>
<dbReference type="eggNOG" id="COG1492">
    <property type="taxonomic scope" value="Bacteria"/>
</dbReference>
<dbReference type="HOGENOM" id="CLU_019250_2_2_6"/>
<dbReference type="OrthoDB" id="9808302at2"/>
<dbReference type="UniPathway" id="UPA00148"/>
<dbReference type="GO" id="GO:0015420">
    <property type="term" value="F:ABC-type vitamin B12 transporter activity"/>
    <property type="evidence" value="ECO:0007669"/>
    <property type="project" value="UniProtKB-UniRule"/>
</dbReference>
<dbReference type="GO" id="GO:0003824">
    <property type="term" value="F:catalytic activity"/>
    <property type="evidence" value="ECO:0007669"/>
    <property type="project" value="InterPro"/>
</dbReference>
<dbReference type="GO" id="GO:0009236">
    <property type="term" value="P:cobalamin biosynthetic process"/>
    <property type="evidence" value="ECO:0007669"/>
    <property type="project" value="UniProtKB-UniRule"/>
</dbReference>
<dbReference type="CDD" id="cd05389">
    <property type="entry name" value="CobQ_N"/>
    <property type="match status" value="1"/>
</dbReference>
<dbReference type="CDD" id="cd01750">
    <property type="entry name" value="GATase1_CobQ"/>
    <property type="match status" value="1"/>
</dbReference>
<dbReference type="Gene3D" id="3.40.50.880">
    <property type="match status" value="1"/>
</dbReference>
<dbReference type="Gene3D" id="3.40.50.300">
    <property type="entry name" value="P-loop containing nucleotide triphosphate hydrolases"/>
    <property type="match status" value="1"/>
</dbReference>
<dbReference type="HAMAP" id="MF_00028">
    <property type="entry name" value="CobQ"/>
    <property type="match status" value="1"/>
</dbReference>
<dbReference type="InterPro" id="IPR029062">
    <property type="entry name" value="Class_I_gatase-like"/>
</dbReference>
<dbReference type="InterPro" id="IPR002586">
    <property type="entry name" value="CobQ/CobB/MinD/ParA_Nub-bd_dom"/>
</dbReference>
<dbReference type="InterPro" id="IPR033949">
    <property type="entry name" value="CobQ_GATase1"/>
</dbReference>
<dbReference type="InterPro" id="IPR047045">
    <property type="entry name" value="CobQ_N"/>
</dbReference>
<dbReference type="InterPro" id="IPR004459">
    <property type="entry name" value="CobQ_synth"/>
</dbReference>
<dbReference type="InterPro" id="IPR011698">
    <property type="entry name" value="GATase_3"/>
</dbReference>
<dbReference type="InterPro" id="IPR027417">
    <property type="entry name" value="P-loop_NTPase"/>
</dbReference>
<dbReference type="NCBIfam" id="TIGR00313">
    <property type="entry name" value="cobQ"/>
    <property type="match status" value="1"/>
</dbReference>
<dbReference type="NCBIfam" id="NF001989">
    <property type="entry name" value="PRK00784.1"/>
    <property type="match status" value="1"/>
</dbReference>
<dbReference type="PANTHER" id="PTHR21343:SF1">
    <property type="entry name" value="COBYRIC ACID SYNTHASE"/>
    <property type="match status" value="1"/>
</dbReference>
<dbReference type="PANTHER" id="PTHR21343">
    <property type="entry name" value="DETHIOBIOTIN SYNTHETASE"/>
    <property type="match status" value="1"/>
</dbReference>
<dbReference type="Pfam" id="PF01656">
    <property type="entry name" value="CbiA"/>
    <property type="match status" value="1"/>
</dbReference>
<dbReference type="Pfam" id="PF07685">
    <property type="entry name" value="GATase_3"/>
    <property type="match status" value="1"/>
</dbReference>
<dbReference type="SUPFAM" id="SSF52317">
    <property type="entry name" value="Class I glutamine amidotransferase-like"/>
    <property type="match status" value="1"/>
</dbReference>
<dbReference type="SUPFAM" id="SSF52540">
    <property type="entry name" value="P-loop containing nucleoside triphosphate hydrolases"/>
    <property type="match status" value="1"/>
</dbReference>
<dbReference type="PROSITE" id="PS51274">
    <property type="entry name" value="GATASE_COBBQ"/>
    <property type="match status" value="1"/>
</dbReference>
<accession>C3K0Z0</accession>
<sequence>MSTLMVQGTTSDAGKSTLVTALCRWLIRQGVAVAPFKPQNMALNSAVTAEGGEIGRAQAVQAQAANLAPHTDMNPVLLKPNSDTGSQVIIHGRAVTSMNAVAYHDYKAIAMQAVLASHARLSEAYPVVMVEGAGSPAEINLRANDIANMGFAEAVDCPVLLIADINRGGVFAHLVGTLELLSPTEQARVKGFIINRFRGDIALLQPGLDWLEARTGKPVVGVLPYVMDLHLEAEDGIDRRQIDKAAQVLKVVVPVLPRISNHTDFDPLRLHPQVDLQFVGPGQPIPAADLIILPGSKSVRSDLAYLRANGWETAVARHLRYGGKVLGICGGLQMLGEQVHDPLGLEGPAGSSDGLGLLAFSTTLEEEKQLRNVRGRLLLEDAQVSGYEIHAGVTTGDGLSNAAVLLDDGRSDGAQSADGQILGTYLHGLFETAAACSALLRWAGLEDVQAVDYHALRERDIERLADLVENHLDTELLRELCGI</sequence>
<protein>
    <recommendedName>
        <fullName evidence="1">Cobyric acid synthase</fullName>
    </recommendedName>
</protein>
<evidence type="ECO:0000255" key="1">
    <source>
        <dbReference type="HAMAP-Rule" id="MF_00028"/>
    </source>
</evidence>
<organism>
    <name type="scientific">Pseudomonas fluorescens (strain SBW25)</name>
    <dbReference type="NCBI Taxonomy" id="216595"/>
    <lineage>
        <taxon>Bacteria</taxon>
        <taxon>Pseudomonadati</taxon>
        <taxon>Pseudomonadota</taxon>
        <taxon>Gammaproteobacteria</taxon>
        <taxon>Pseudomonadales</taxon>
        <taxon>Pseudomonadaceae</taxon>
        <taxon>Pseudomonas</taxon>
    </lineage>
</organism>
<proteinExistence type="inferred from homology"/>
<feature type="chain" id="PRO_1000201971" description="Cobyric acid synthase">
    <location>
        <begin position="1"/>
        <end position="483"/>
    </location>
</feature>
<feature type="domain" description="GATase cobBQ-type" evidence="1">
    <location>
        <begin position="248"/>
        <end position="435"/>
    </location>
</feature>
<feature type="active site" description="Nucleophile" evidence="1">
    <location>
        <position position="329"/>
    </location>
</feature>
<feature type="active site" evidence="1">
    <location>
        <position position="427"/>
    </location>
</feature>
<gene>
    <name evidence="1" type="primary">cobQ</name>
    <name type="ordered locus">PFLU_4486</name>
</gene>